<gene>
    <name type="primary">kto</name>
    <name type="synonym">Med12</name>
    <name type="synonym">Trap230</name>
    <name type="ORF">CG8491</name>
</gene>
<keyword id="KW-0010">Activator</keyword>
<keyword id="KW-0217">Developmental protein</keyword>
<keyword id="KW-0539">Nucleus</keyword>
<keyword id="KW-0597">Phosphoprotein</keyword>
<keyword id="KW-1185">Reference proteome</keyword>
<keyword id="KW-0678">Repressor</keyword>
<keyword id="KW-0804">Transcription</keyword>
<keyword id="KW-0805">Transcription regulation</keyword>
<dbReference type="EMBL" id="AF324426">
    <property type="protein sequence ID" value="AAG48328.1"/>
    <property type="molecule type" value="mRNA"/>
</dbReference>
<dbReference type="EMBL" id="AE014296">
    <property type="protein sequence ID" value="AAF49103.2"/>
    <property type="molecule type" value="Genomic_DNA"/>
</dbReference>
<dbReference type="EMBL" id="AY122257">
    <property type="protein sequence ID" value="AAM52769.1"/>
    <property type="status" value="ALT_FRAME"/>
    <property type="molecule type" value="mRNA"/>
</dbReference>
<dbReference type="RefSeq" id="NP_524786.1">
    <property type="nucleotide sequence ID" value="NM_080047.2"/>
</dbReference>
<dbReference type="SMR" id="Q9VW47"/>
<dbReference type="BioGRID" id="69311">
    <property type="interactions" value="14"/>
</dbReference>
<dbReference type="ComplexPortal" id="CPX-7701">
    <property type="entry name" value="CKM complex"/>
</dbReference>
<dbReference type="DIP" id="DIP-29990N"/>
<dbReference type="FunCoup" id="Q9VW47">
    <property type="interactions" value="963"/>
</dbReference>
<dbReference type="IntAct" id="Q9VW47">
    <property type="interactions" value="54"/>
</dbReference>
<dbReference type="MINT" id="Q9VW47"/>
<dbReference type="STRING" id="7227.FBpp0074653"/>
<dbReference type="GlyGen" id="Q9VW47">
    <property type="glycosylation" value="1 site"/>
</dbReference>
<dbReference type="iPTMnet" id="Q9VW47"/>
<dbReference type="PaxDb" id="7227-FBpp0074653"/>
<dbReference type="EnsemblMetazoa" id="FBtr0074884">
    <property type="protein sequence ID" value="FBpp0074653"/>
    <property type="gene ID" value="FBgn0001324"/>
</dbReference>
<dbReference type="GeneID" id="44830"/>
<dbReference type="KEGG" id="dme:Dmel_CG8491"/>
<dbReference type="AGR" id="FB:FBgn0001324"/>
<dbReference type="CTD" id="44830"/>
<dbReference type="FlyBase" id="FBgn0001324">
    <property type="gene designation" value="kto"/>
</dbReference>
<dbReference type="VEuPathDB" id="VectorBase:FBgn0001324"/>
<dbReference type="eggNOG" id="KOG3598">
    <property type="taxonomic scope" value="Eukaryota"/>
</dbReference>
<dbReference type="GeneTree" id="ENSGT00440000037505"/>
<dbReference type="HOGENOM" id="CLU_000904_0_0_1"/>
<dbReference type="InParanoid" id="Q9VW47"/>
<dbReference type="OMA" id="YQQSHDK"/>
<dbReference type="OrthoDB" id="20828at2759"/>
<dbReference type="PhylomeDB" id="Q9VW47"/>
<dbReference type="Reactome" id="R-DME-9841922">
    <property type="pathway name" value="MLL4 and MLL3 complexes regulate expression of PPARG target genes in adipogenesis and hepatic steatosis"/>
</dbReference>
<dbReference type="SignaLink" id="Q9VW47"/>
<dbReference type="BioGRID-ORCS" id="44830">
    <property type="hits" value="0 hits in 3 CRISPR screens"/>
</dbReference>
<dbReference type="ChiTaRS" id="kto">
    <property type="organism name" value="fly"/>
</dbReference>
<dbReference type="GenomeRNAi" id="44830"/>
<dbReference type="PRO" id="PR:Q9VW47"/>
<dbReference type="Proteomes" id="UP000000803">
    <property type="component" value="Chromosome 3L"/>
</dbReference>
<dbReference type="Bgee" id="FBgn0001324">
    <property type="expression patterns" value="Expressed in mid-late elongation-stage spermatid (Drosophila) in testis and 79 other cell types or tissues"/>
</dbReference>
<dbReference type="ExpressionAtlas" id="Q9VW47">
    <property type="expression patterns" value="baseline and differential"/>
</dbReference>
<dbReference type="GO" id="GO:1990508">
    <property type="term" value="C:CKM complex"/>
    <property type="evidence" value="ECO:0000314"/>
    <property type="project" value="FlyBase"/>
</dbReference>
<dbReference type="GO" id="GO:0070847">
    <property type="term" value="C:core mediator complex"/>
    <property type="evidence" value="ECO:0000353"/>
    <property type="project" value="FlyBase"/>
</dbReference>
<dbReference type="GO" id="GO:0016592">
    <property type="term" value="C:mediator complex"/>
    <property type="evidence" value="ECO:0000314"/>
    <property type="project" value="UniProtKB"/>
</dbReference>
<dbReference type="GO" id="GO:0005700">
    <property type="term" value="C:polytene chromosome"/>
    <property type="evidence" value="ECO:0000314"/>
    <property type="project" value="FlyBase"/>
</dbReference>
<dbReference type="GO" id="GO:0003713">
    <property type="term" value="F:transcription coactivator activity"/>
    <property type="evidence" value="ECO:0000318"/>
    <property type="project" value="GO_Central"/>
</dbReference>
<dbReference type="GO" id="GO:0003712">
    <property type="term" value="F:transcription coregulator activity"/>
    <property type="evidence" value="ECO:0000314"/>
    <property type="project" value="UniProtKB"/>
</dbReference>
<dbReference type="GO" id="GO:0048102">
    <property type="term" value="P:autophagic cell death"/>
    <property type="evidence" value="ECO:0000315"/>
    <property type="project" value="FlyBase"/>
</dbReference>
<dbReference type="GO" id="GO:0022416">
    <property type="term" value="P:chaeta development"/>
    <property type="evidence" value="ECO:0000315"/>
    <property type="project" value="FlyBase"/>
</dbReference>
<dbReference type="GO" id="GO:0048749">
    <property type="term" value="P:compound eye development"/>
    <property type="evidence" value="ECO:0000315"/>
    <property type="project" value="FlyBase"/>
</dbReference>
<dbReference type="GO" id="GO:0036011">
    <property type="term" value="P:imaginal disc-derived leg segmentation"/>
    <property type="evidence" value="ECO:0000315"/>
    <property type="project" value="FlyBase"/>
</dbReference>
<dbReference type="GO" id="GO:0090263">
    <property type="term" value="P:positive regulation of canonical Wnt signaling pathway"/>
    <property type="evidence" value="ECO:0000315"/>
    <property type="project" value="FlyBase"/>
</dbReference>
<dbReference type="GO" id="GO:0045944">
    <property type="term" value="P:positive regulation of transcription by RNA polymerase II"/>
    <property type="evidence" value="ECO:0000318"/>
    <property type="project" value="GO_Central"/>
</dbReference>
<dbReference type="GO" id="GO:0006357">
    <property type="term" value="P:regulation of transcription by RNA polymerase II"/>
    <property type="evidence" value="ECO:0000314"/>
    <property type="project" value="UniProtKB"/>
</dbReference>
<dbReference type="GO" id="GO:0035075">
    <property type="term" value="P:response to ecdysone"/>
    <property type="evidence" value="ECO:0000315"/>
    <property type="project" value="FlyBase"/>
</dbReference>
<dbReference type="GO" id="GO:0045498">
    <property type="term" value="P:sex comb development"/>
    <property type="evidence" value="ECO:0000315"/>
    <property type="project" value="FlyBase"/>
</dbReference>
<dbReference type="InterPro" id="IPR051647">
    <property type="entry name" value="Mediator_comp_sub12"/>
</dbReference>
<dbReference type="InterPro" id="IPR019035">
    <property type="entry name" value="Mediator_Med12"/>
</dbReference>
<dbReference type="InterPro" id="IPR021990">
    <property type="entry name" value="Mediator_Med12_LCEWAV"/>
</dbReference>
<dbReference type="PANTHER" id="PTHR46007">
    <property type="entry name" value="MEDIATOR OF RNA POLYMERASE II TRANSCRIPTION SUBUNIT 12"/>
    <property type="match status" value="1"/>
</dbReference>
<dbReference type="PANTHER" id="PTHR46007:SF11">
    <property type="entry name" value="MEDIATOR OF RNA POLYMERASE II TRANSCRIPTION SUBUNIT 12"/>
    <property type="match status" value="1"/>
</dbReference>
<dbReference type="Pfam" id="PF09497">
    <property type="entry name" value="Med12"/>
    <property type="match status" value="1"/>
</dbReference>
<dbReference type="Pfam" id="PF12145">
    <property type="entry name" value="Med12-LCEWAV"/>
    <property type="match status" value="1"/>
</dbReference>
<dbReference type="SMART" id="SM01281">
    <property type="entry name" value="Med12"/>
    <property type="match status" value="1"/>
</dbReference>
<feature type="chain" id="PRO_0000312963" description="Mediator of RNA polymerase II transcription subunit 12">
    <location>
        <begin position="1"/>
        <end position="2531"/>
    </location>
</feature>
<feature type="region of interest" description="Disordered" evidence="1">
    <location>
        <begin position="1"/>
        <end position="41"/>
    </location>
</feature>
<feature type="region of interest" description="Disordered" evidence="1">
    <location>
        <begin position="204"/>
        <end position="283"/>
    </location>
</feature>
<feature type="region of interest" description="Disordered" evidence="1">
    <location>
        <begin position="584"/>
        <end position="604"/>
    </location>
</feature>
<feature type="region of interest" description="Disordered" evidence="1">
    <location>
        <begin position="742"/>
        <end position="762"/>
    </location>
</feature>
<feature type="region of interest" description="Disordered" evidence="1">
    <location>
        <begin position="796"/>
        <end position="824"/>
    </location>
</feature>
<feature type="region of interest" description="Disordered" evidence="1">
    <location>
        <begin position="1585"/>
        <end position="1608"/>
    </location>
</feature>
<feature type="region of interest" description="Disordered" evidence="1">
    <location>
        <begin position="1898"/>
        <end position="2092"/>
    </location>
</feature>
<feature type="region of interest" description="Disordered" evidence="1">
    <location>
        <begin position="2114"/>
        <end position="2218"/>
    </location>
</feature>
<feature type="region of interest" description="Disordered" evidence="1">
    <location>
        <begin position="2469"/>
        <end position="2508"/>
    </location>
</feature>
<feature type="compositionally biased region" description="Low complexity" evidence="1">
    <location>
        <begin position="210"/>
        <end position="247"/>
    </location>
</feature>
<feature type="compositionally biased region" description="Basic and acidic residues" evidence="1">
    <location>
        <begin position="586"/>
        <end position="604"/>
    </location>
</feature>
<feature type="compositionally biased region" description="Pro residues" evidence="1">
    <location>
        <begin position="748"/>
        <end position="757"/>
    </location>
</feature>
<feature type="compositionally biased region" description="Basic and acidic residues" evidence="1">
    <location>
        <begin position="796"/>
        <end position="805"/>
    </location>
</feature>
<feature type="compositionally biased region" description="Polar residues" evidence="1">
    <location>
        <begin position="1585"/>
        <end position="1595"/>
    </location>
</feature>
<feature type="compositionally biased region" description="Polar residues" evidence="1">
    <location>
        <begin position="1901"/>
        <end position="1910"/>
    </location>
</feature>
<feature type="compositionally biased region" description="Basic residues" evidence="1">
    <location>
        <begin position="1919"/>
        <end position="1933"/>
    </location>
</feature>
<feature type="compositionally biased region" description="Low complexity" evidence="1">
    <location>
        <begin position="1938"/>
        <end position="2038"/>
    </location>
</feature>
<feature type="compositionally biased region" description="Low complexity" evidence="1">
    <location>
        <begin position="2045"/>
        <end position="2055"/>
    </location>
</feature>
<feature type="compositionally biased region" description="Gly residues" evidence="1">
    <location>
        <begin position="2056"/>
        <end position="2066"/>
    </location>
</feature>
<feature type="compositionally biased region" description="Low complexity" evidence="1">
    <location>
        <begin position="2067"/>
        <end position="2080"/>
    </location>
</feature>
<feature type="compositionally biased region" description="Low complexity" evidence="1">
    <location>
        <begin position="2121"/>
        <end position="2132"/>
    </location>
</feature>
<feature type="compositionally biased region" description="Low complexity" evidence="1">
    <location>
        <begin position="2139"/>
        <end position="2205"/>
    </location>
</feature>
<feature type="compositionally biased region" description="Gly residues" evidence="1">
    <location>
        <begin position="2469"/>
        <end position="2496"/>
    </location>
</feature>
<feature type="compositionally biased region" description="Low complexity" evidence="1">
    <location>
        <begin position="2497"/>
        <end position="2507"/>
    </location>
</feature>
<feature type="modified residue" description="Phosphothreonine" evidence="6">
    <location>
        <position position="745"/>
    </location>
</feature>
<feature type="modified residue" description="Phosphoserine" evidence="6">
    <location>
        <position position="748"/>
    </location>
</feature>
<feature type="modified residue" description="Phosphoserine" evidence="5">
    <location>
        <position position="781"/>
    </location>
</feature>
<feature type="modified residue" description="Phosphoserine" evidence="6">
    <location>
        <position position="806"/>
    </location>
</feature>
<feature type="modified residue" description="Phosphoserine" evidence="6">
    <location>
        <position position="1356"/>
    </location>
</feature>
<feature type="modified residue" description="Phosphothreonine" evidence="6">
    <location>
        <position position="1360"/>
    </location>
</feature>
<evidence type="ECO:0000256" key="1">
    <source>
        <dbReference type="SAM" id="MobiDB-lite"/>
    </source>
</evidence>
<evidence type="ECO:0000269" key="2">
    <source>
    </source>
</evidence>
<evidence type="ECO:0000269" key="3">
    <source>
    </source>
</evidence>
<evidence type="ECO:0000269" key="4">
    <source>
    </source>
</evidence>
<evidence type="ECO:0000269" key="5">
    <source>
    </source>
</evidence>
<evidence type="ECO:0000269" key="6">
    <source>
    </source>
</evidence>
<evidence type="ECO:0000305" key="7"/>
<sequence>MLSMLQEKRPLKRTRLGPPDIYPQDAKQREDELTPTNVKHGFTTTPPLSDEFGTAHNSNVNASKVSAFFSGVLAKKEELMTLPDTGRKKQQINCKDNFWPVSPRRKCTVDAWFKDLAGNKPLLSLAKRAPSFNKKEEIFITLCENQVNMQRATWFIKLSAAYTLSFTESKNKKRSIYDPAAEWTGNMIKFMKELLPKLQEYYQQNHDKSSSNGTTSGSLTAAGNGPASNGSTGTSSINSVTGSSASTNVIPVPSMASPLPPIHSPANGQQAAPGGGVNAGSVMPTTGSLGGVVGGPGSSVVGGAAGAGAAVPPGSTISGIGSQFEDSRNALKYWKYCHQLSKYMYEESLLDRQEFLNWILDLLDKMRTQASFDEPLKKLVLSFALQYMHDFVQSERLCRKMAYIVSKKLAQLLNTVVEQQTIKELDEPKLQQDPYELALQEQMSCPHHRDIVLYLSTILQIITIECPTALVWSGIAAHRAPSSLLGSPLDHLPLAPSVLPMPTRCPRTNHEIRRQLRAAESDIVLRTQHAEQRWFAAKWLSAGKNQYTSVLATLDHLDTHCFDRMEHNNSIDTLYAQIFPSPTVSRRREEDQVEPRPPYEPKQDKDTVRILCEWAVSGQRWGEHRAMVVAILLDKRQIDVTSTPADQQSSDKDDKDSLASGAGLIDGLPVFQHVLMHFLDHDAPVLDEHVSSPQQRTEFTNLVQLFSALIRHDVFSHNAYMHTLISRGDLLLESVLVIKSGTTATKTSPPPPAPPPTTTHGFDDDGFGGGLDFKHNEFDDSNVDDDLDKLVQNIKEKGQQHEAPDSPKIGPPGDGETNPGGSISRHYVYTKHFPIPQDDPSMSSYSSESNQRYILLFGVGKERDEKKHAVKKMSKEIGKLFTKKFSIDVAAAGHVKKHSRNEFNFEATTSKCQQMAYFDQHVVTAQCAANVLEQLNGFALGNNNYLPVQEHVAFLFDLMELALNIYSLLELCDSLLKELPEVEHQLQLKKSNLVRSYTTSLALYIVSILRRYHSCLLLSPEQTLSVFEGVCRTIRHVSNPSECTSAERCIIAYLSDLHESCVLLQGKEQSTEYYQQLQCIKRFKDIFNTPEQLDLPPQGYNPLLLQELFMAPRRGGKLDPHWLGTLHESPANVYSFVSNALIAVCRETDNERLNDVALACAELTASCNVLSEEWIYALQSLCSGSKSPRYPHLGGQVDIGQLKTHNALAVFVCILVARHCFSLADFVSKFALPTLARSVSAGGAELSVDAEAGARLTCHLVLKLFKTLEIPQPGMYSVSTSPNPLHAVGNDFSIRLSCDRHLLVGAHKTIPIAAVLAVLKAILIVVDNAALKTPLASGSGTSSGGLGGAFGSGKRSGFNTPVHPGSTPKSNEQRPADLSQILGTSDLQLGSSLTSEPEALQQPSVGGMEQISLLEFAQAVLKQICAQEHVLERCLKNAEQLCDMIIDEMLTAKQAQRVLHMICYPEPEFNIISELDQRSMIVRILENLGQWTLRISWLDLQLMYRQSLSNNAELNVWLDTVARAAIDVFHMEEVVLPGAVKATHKPKPSTWLVAPLIAKLTPAVQGRILRVAGQVLESMNYFSKVSKSDCNSSGSGDEREKSNSCHSSNSYGLGGVPARNKKMPLDYQPFLGLILTCLKGQDEYKENLLVSLYAQLSQCLQSFAELDTIGGIDEPQAREEILDALQLRFSLVGGMFEAIQKNSTPTTDWAILLAQLVCQGVVDLSCNRELFTTVVDMLATLVHSTLVSDDERHYMNLMKKLKKEIGEKNNASIRVIRQLLPLYKQPTEVIACEHSGMDTKGNKICDIDKKQLRISDKQRISVWDILEGHKNPAPLSWVWFGAVKLERKPLTYEEAHRNLKYHTHSLVKPSSYYYEPLPLPPEDIEPVPEKICIKDEMKADTPSSVDQSPSAVVGGTGRGRGKGTTTRKRKPKNPKTPPVVNTQQQQPQLAQQPQQPQNVQQQQLQQQQQQQQHMQQQHMQQQQMQPNQMGQMPMNMPMNMQQFAPNPNNMMQQNAMLQQQQQQQMQQMGNNPMQQQLNVGGGNGQPNPQMNFMQQGPGGGGAGPQGMPGQQQQWHNAPQQQQPPQPYHNQYAPHQQNMQSNRIERPPLNANSKQALSQMLRQRQPFQQQAQQGPGGGFNPMQQQPQASQQQPGPQQQMNPNQMRQQQMNPQQNPQSVAAFNAMQQQPQQNAQQQQMNPNQQQQQQFMRGGNMRPGMAPNQMNQMNMGGQGMSQNPMMQQQIPQNMVGMVNPNANQMMQSGGAQGGNGVGVGVGVGVGGAGNNPNMGMGGMPQQGMIQQQPQQQPQQQVQFQNFQNQYQQQQQQGMQQQGGGAGVGVGVGMAPNQQQQQQANMMGNFNPQMQQGNRNNPDFMAAAAVAQQQQQQQQQQRVVPGGMMAGNRNQYMNQAPNVTMSTMMGPGPGGVVGQVPPYARQQSAGGGKPGVLNTQQQFQQQQQQQQQLRHQMMQLQGMGGGAGGGMGAGPQQGGGAVGGGAGGGMVPQQQSMNQQQTPNLVAQLQRQNMMGQQQYQPPPY</sequence>
<protein>
    <recommendedName>
        <fullName>Mediator of RNA polymerase II transcription subunit 12</fullName>
    </recommendedName>
    <alternativeName>
        <fullName>Mediator complex subunit 12</fullName>
    </alternativeName>
    <alternativeName>
        <fullName>Mediator complex subunit Kohtalo</fullName>
    </alternativeName>
    <alternativeName>
        <fullName>dTRAP230</fullName>
    </alternativeName>
</protein>
<organism>
    <name type="scientific">Drosophila melanogaster</name>
    <name type="common">Fruit fly</name>
    <dbReference type="NCBI Taxonomy" id="7227"/>
    <lineage>
        <taxon>Eukaryota</taxon>
        <taxon>Metazoa</taxon>
        <taxon>Ecdysozoa</taxon>
        <taxon>Arthropoda</taxon>
        <taxon>Hexapoda</taxon>
        <taxon>Insecta</taxon>
        <taxon>Pterygota</taxon>
        <taxon>Neoptera</taxon>
        <taxon>Endopterygota</taxon>
        <taxon>Diptera</taxon>
        <taxon>Brachycera</taxon>
        <taxon>Muscomorpha</taxon>
        <taxon>Ephydroidea</taxon>
        <taxon>Drosophilidae</taxon>
        <taxon>Drosophila</taxon>
        <taxon>Sophophora</taxon>
    </lineage>
</organism>
<proteinExistence type="evidence at protein level"/>
<comment type="function">
    <text evidence="2 3 4">Component of the Mediator complex, a coactivator involved in regulated gene transcription of nearly all RNA polymerase II-dependent genes. Mediator functions as a bridge to convey information from gene-specific regulatory proteins to the basal RNA polymerase II transcription machinery. Mediator is recruited to promoters by direct interactions with regulatory proteins and serves as a scaffold for the assembly of a functional preinitiation complex with RNA polymerase II and the general transcription factors. Required for leg and eye development and macrochaete specification or differentiation.</text>
</comment>
<comment type="subunit">
    <text>Component of the Cdk8 module of the Mediator complex, composed of CycC, Cdk8, kto and skd.</text>
</comment>
<comment type="interaction">
    <interactant intactId="EBI-139710">
        <id>Q9VW47</id>
    </interactant>
    <interactant intactId="EBI-163640">
        <id>Q9VT57</id>
        <label>Cdk8</label>
    </interactant>
    <organismsDiffer>false</organismsDiffer>
    <experiments>2</experiments>
</comment>
<comment type="interaction">
    <interactant intactId="EBI-139710">
        <id>Q9VW47</id>
    </interactant>
    <interactant intactId="EBI-195485">
        <id>P25008</id>
        <label>CycC</label>
    </interactant>
    <organismsDiffer>false</organismsDiffer>
    <experiments>2</experiments>
</comment>
<comment type="subcellular location">
    <subcellularLocation>
        <location evidence="3">Nucleus</location>
    </subcellularLocation>
</comment>
<comment type="similarity">
    <text evidence="7">Belongs to the Mediator complex subunit 12 family.</text>
</comment>
<comment type="sequence caution" evidence="7">
    <conflict type="frameshift">
        <sequence resource="EMBL-CDS" id="AAM52769"/>
    </conflict>
</comment>
<name>MED12_DROME</name>
<reference key="1">
    <citation type="journal article" date="2001" name="Development">
        <title>Drosophila homologues of the transcriptional coactivation complex subunits TRAP240 and TRAP230 are required for identical processes in eye-antennal disc development.</title>
        <authorList>
            <person name="Treisman J.E."/>
        </authorList>
    </citation>
    <scope>NUCLEOTIDE SEQUENCE [MRNA]</scope>
    <scope>FUNCTION</scope>
</reference>
<reference key="2">
    <citation type="journal article" date="2000" name="Science">
        <title>The genome sequence of Drosophila melanogaster.</title>
        <authorList>
            <person name="Adams M.D."/>
            <person name="Celniker S.E."/>
            <person name="Holt R.A."/>
            <person name="Evans C.A."/>
            <person name="Gocayne J.D."/>
            <person name="Amanatides P.G."/>
            <person name="Scherer S.E."/>
            <person name="Li P.W."/>
            <person name="Hoskins R.A."/>
            <person name="Galle R.F."/>
            <person name="George R.A."/>
            <person name="Lewis S.E."/>
            <person name="Richards S."/>
            <person name="Ashburner M."/>
            <person name="Henderson S.N."/>
            <person name="Sutton G.G."/>
            <person name="Wortman J.R."/>
            <person name="Yandell M.D."/>
            <person name="Zhang Q."/>
            <person name="Chen L.X."/>
            <person name="Brandon R.C."/>
            <person name="Rogers Y.-H.C."/>
            <person name="Blazej R.G."/>
            <person name="Champe M."/>
            <person name="Pfeiffer B.D."/>
            <person name="Wan K.H."/>
            <person name="Doyle C."/>
            <person name="Baxter E.G."/>
            <person name="Helt G."/>
            <person name="Nelson C.R."/>
            <person name="Miklos G.L.G."/>
            <person name="Abril J.F."/>
            <person name="Agbayani A."/>
            <person name="An H.-J."/>
            <person name="Andrews-Pfannkoch C."/>
            <person name="Baldwin D."/>
            <person name="Ballew R.M."/>
            <person name="Basu A."/>
            <person name="Baxendale J."/>
            <person name="Bayraktaroglu L."/>
            <person name="Beasley E.M."/>
            <person name="Beeson K.Y."/>
            <person name="Benos P.V."/>
            <person name="Berman B.P."/>
            <person name="Bhandari D."/>
            <person name="Bolshakov S."/>
            <person name="Borkova D."/>
            <person name="Botchan M.R."/>
            <person name="Bouck J."/>
            <person name="Brokstein P."/>
            <person name="Brottier P."/>
            <person name="Burtis K.C."/>
            <person name="Busam D.A."/>
            <person name="Butler H."/>
            <person name="Cadieu E."/>
            <person name="Center A."/>
            <person name="Chandra I."/>
            <person name="Cherry J.M."/>
            <person name="Cawley S."/>
            <person name="Dahlke C."/>
            <person name="Davenport L.B."/>
            <person name="Davies P."/>
            <person name="de Pablos B."/>
            <person name="Delcher A."/>
            <person name="Deng Z."/>
            <person name="Mays A.D."/>
            <person name="Dew I."/>
            <person name="Dietz S.M."/>
            <person name="Dodson K."/>
            <person name="Doup L.E."/>
            <person name="Downes M."/>
            <person name="Dugan-Rocha S."/>
            <person name="Dunkov B.C."/>
            <person name="Dunn P."/>
            <person name="Durbin K.J."/>
            <person name="Evangelista C.C."/>
            <person name="Ferraz C."/>
            <person name="Ferriera S."/>
            <person name="Fleischmann W."/>
            <person name="Fosler C."/>
            <person name="Gabrielian A.E."/>
            <person name="Garg N.S."/>
            <person name="Gelbart W.M."/>
            <person name="Glasser K."/>
            <person name="Glodek A."/>
            <person name="Gong F."/>
            <person name="Gorrell J.H."/>
            <person name="Gu Z."/>
            <person name="Guan P."/>
            <person name="Harris M."/>
            <person name="Harris N.L."/>
            <person name="Harvey D.A."/>
            <person name="Heiman T.J."/>
            <person name="Hernandez J.R."/>
            <person name="Houck J."/>
            <person name="Hostin D."/>
            <person name="Houston K.A."/>
            <person name="Howland T.J."/>
            <person name="Wei M.-H."/>
            <person name="Ibegwam C."/>
            <person name="Jalali M."/>
            <person name="Kalush F."/>
            <person name="Karpen G.H."/>
            <person name="Ke Z."/>
            <person name="Kennison J.A."/>
            <person name="Ketchum K.A."/>
            <person name="Kimmel B.E."/>
            <person name="Kodira C.D."/>
            <person name="Kraft C.L."/>
            <person name="Kravitz S."/>
            <person name="Kulp D."/>
            <person name="Lai Z."/>
            <person name="Lasko P."/>
            <person name="Lei Y."/>
            <person name="Levitsky A.A."/>
            <person name="Li J.H."/>
            <person name="Li Z."/>
            <person name="Liang Y."/>
            <person name="Lin X."/>
            <person name="Liu X."/>
            <person name="Mattei B."/>
            <person name="McIntosh T.C."/>
            <person name="McLeod M.P."/>
            <person name="McPherson D."/>
            <person name="Merkulov G."/>
            <person name="Milshina N.V."/>
            <person name="Mobarry C."/>
            <person name="Morris J."/>
            <person name="Moshrefi A."/>
            <person name="Mount S.M."/>
            <person name="Moy M."/>
            <person name="Murphy B."/>
            <person name="Murphy L."/>
            <person name="Muzny D.M."/>
            <person name="Nelson D.L."/>
            <person name="Nelson D.R."/>
            <person name="Nelson K.A."/>
            <person name="Nixon K."/>
            <person name="Nusskern D.R."/>
            <person name="Pacleb J.M."/>
            <person name="Palazzolo M."/>
            <person name="Pittman G.S."/>
            <person name="Pan S."/>
            <person name="Pollard J."/>
            <person name="Puri V."/>
            <person name="Reese M.G."/>
            <person name="Reinert K."/>
            <person name="Remington K."/>
            <person name="Saunders R.D.C."/>
            <person name="Scheeler F."/>
            <person name="Shen H."/>
            <person name="Shue B.C."/>
            <person name="Siden-Kiamos I."/>
            <person name="Simpson M."/>
            <person name="Skupski M.P."/>
            <person name="Smith T.J."/>
            <person name="Spier E."/>
            <person name="Spradling A.C."/>
            <person name="Stapleton M."/>
            <person name="Strong R."/>
            <person name="Sun E."/>
            <person name="Svirskas R."/>
            <person name="Tector C."/>
            <person name="Turner R."/>
            <person name="Venter E."/>
            <person name="Wang A.H."/>
            <person name="Wang X."/>
            <person name="Wang Z.-Y."/>
            <person name="Wassarman D.A."/>
            <person name="Weinstock G.M."/>
            <person name="Weissenbach J."/>
            <person name="Williams S.M."/>
            <person name="Woodage T."/>
            <person name="Worley K.C."/>
            <person name="Wu D."/>
            <person name="Yang S."/>
            <person name="Yao Q.A."/>
            <person name="Ye J."/>
            <person name="Yeh R.-F."/>
            <person name="Zaveri J.S."/>
            <person name="Zhan M."/>
            <person name="Zhang G."/>
            <person name="Zhao Q."/>
            <person name="Zheng L."/>
            <person name="Zheng X.H."/>
            <person name="Zhong F.N."/>
            <person name="Zhong W."/>
            <person name="Zhou X."/>
            <person name="Zhu S.C."/>
            <person name="Zhu X."/>
            <person name="Smith H.O."/>
            <person name="Gibbs R.A."/>
            <person name="Myers E.W."/>
            <person name="Rubin G.M."/>
            <person name="Venter J.C."/>
        </authorList>
    </citation>
    <scope>NUCLEOTIDE SEQUENCE [LARGE SCALE GENOMIC DNA]</scope>
    <source>
        <strain>Berkeley</strain>
    </source>
</reference>
<reference key="3">
    <citation type="journal article" date="2002" name="Genome Biol.">
        <title>Annotation of the Drosophila melanogaster euchromatic genome: a systematic review.</title>
        <authorList>
            <person name="Misra S."/>
            <person name="Crosby M.A."/>
            <person name="Mungall C.J."/>
            <person name="Matthews B.B."/>
            <person name="Campbell K.S."/>
            <person name="Hradecky P."/>
            <person name="Huang Y."/>
            <person name="Kaminker J.S."/>
            <person name="Millburn G.H."/>
            <person name="Prochnik S.E."/>
            <person name="Smith C.D."/>
            <person name="Tupy J.L."/>
            <person name="Whitfield E.J."/>
            <person name="Bayraktaroglu L."/>
            <person name="Berman B.P."/>
            <person name="Bettencourt B.R."/>
            <person name="Celniker S.E."/>
            <person name="de Grey A.D.N.J."/>
            <person name="Drysdale R.A."/>
            <person name="Harris N.L."/>
            <person name="Richter J."/>
            <person name="Russo S."/>
            <person name="Schroeder A.J."/>
            <person name="Shu S.Q."/>
            <person name="Stapleton M."/>
            <person name="Yamada C."/>
            <person name="Ashburner M."/>
            <person name="Gelbart W.M."/>
            <person name="Rubin G.M."/>
            <person name="Lewis S.E."/>
        </authorList>
    </citation>
    <scope>GENOME REANNOTATION</scope>
    <source>
        <strain>Berkeley</strain>
    </source>
</reference>
<reference key="4">
    <citation type="journal article" date="2002" name="Genome Biol.">
        <title>A Drosophila full-length cDNA resource.</title>
        <authorList>
            <person name="Stapleton M."/>
            <person name="Carlson J.W."/>
            <person name="Brokstein P."/>
            <person name="Yu C."/>
            <person name="Champe M."/>
            <person name="George R.A."/>
            <person name="Guarin H."/>
            <person name="Kronmiller B."/>
            <person name="Pacleb J.M."/>
            <person name="Park S."/>
            <person name="Wan K.H."/>
            <person name="Rubin G.M."/>
            <person name="Celniker S.E."/>
        </authorList>
    </citation>
    <scope>NUCLEOTIDE SEQUENCE [LARGE SCALE MRNA] OF 964-2531</scope>
    <source>
        <strain>Berkeley</strain>
        <tissue>Embryo</tissue>
    </source>
</reference>
<reference key="5">
    <citation type="journal article" date="2003" name="Development">
        <title>Two subunits of the Drosophila mediator complex act together to control cell affinity.</title>
        <authorList>
            <person name="Janody F."/>
            <person name="Martirosyan Z."/>
            <person name="Benlali A."/>
            <person name="Treisman J.E."/>
        </authorList>
    </citation>
    <scope>FUNCTION</scope>
    <scope>INTERACTION WITH SKD</scope>
    <scope>SUBCELLULAR LOCATION</scope>
</reference>
<reference key="6">
    <citation type="journal article" date="2007" name="EMBO J.">
        <title>Distinct roles for Mediator Cdk8 module subunits in Drosophila development.</title>
        <authorList>
            <person name="Loncle N."/>
            <person name="Boube M."/>
            <person name="Joulia L."/>
            <person name="Boschiero C."/>
            <person name="Werner M."/>
            <person name="Cribbs D.L."/>
            <person name="Bourbon H.-M."/>
        </authorList>
    </citation>
    <scope>FUNCTION</scope>
    <scope>INTERACTION WITH CYCC; CDK8 AND SKD</scope>
</reference>
<reference key="7">
    <citation type="journal article" date="2007" name="Mol. Biosyst.">
        <title>An integrated chemical, mass spectrometric and computational strategy for (quantitative) phosphoproteomics: application to Drosophila melanogaster Kc167 cells.</title>
        <authorList>
            <person name="Bodenmiller B."/>
            <person name="Mueller L.N."/>
            <person name="Pedrioli P.G.A."/>
            <person name="Pflieger D."/>
            <person name="Juenger M.A."/>
            <person name="Eng J.K."/>
            <person name="Aebersold R."/>
            <person name="Tao W.A."/>
        </authorList>
    </citation>
    <scope>PHOSPHORYLATION [LARGE SCALE ANALYSIS] AT SER-781</scope>
    <scope>IDENTIFICATION BY MASS SPECTROMETRY</scope>
</reference>
<reference key="8">
    <citation type="journal article" date="2008" name="J. Proteome Res.">
        <title>Phosphoproteome analysis of Drosophila melanogaster embryos.</title>
        <authorList>
            <person name="Zhai B."/>
            <person name="Villen J."/>
            <person name="Beausoleil S.A."/>
            <person name="Mintseris J."/>
            <person name="Gygi S.P."/>
        </authorList>
    </citation>
    <scope>PHOSPHORYLATION [LARGE SCALE ANALYSIS] AT THR-745; SER-748; SER-806; SER-1356 AND THR-1360</scope>
    <scope>IDENTIFICATION BY MASS SPECTROMETRY</scope>
    <source>
        <tissue>Embryo</tissue>
    </source>
</reference>
<accession>Q9VW47</accession>
<accession>Q8MQW4</accession>
<accession>Q9GPH4</accession>